<gene>
    <name evidence="1" type="primary">pstB2</name>
    <name type="ordered locus">lin2639</name>
</gene>
<proteinExistence type="inferred from homology"/>
<name>PSTB2_LISIN</name>
<evidence type="ECO:0000255" key="1">
    <source>
        <dbReference type="HAMAP-Rule" id="MF_01702"/>
    </source>
</evidence>
<evidence type="ECO:0000256" key="2">
    <source>
        <dbReference type="SAM" id="MobiDB-lite"/>
    </source>
</evidence>
<keyword id="KW-0067">ATP-binding</keyword>
<keyword id="KW-1003">Cell membrane</keyword>
<keyword id="KW-0472">Membrane</keyword>
<keyword id="KW-0547">Nucleotide-binding</keyword>
<keyword id="KW-0592">Phosphate transport</keyword>
<keyword id="KW-1278">Translocase</keyword>
<keyword id="KW-0813">Transport</keyword>
<comment type="function">
    <text evidence="1">Part of the ABC transporter complex PstSACB involved in phosphate import. Responsible for energy coupling to the transport system.</text>
</comment>
<comment type="catalytic activity">
    <reaction evidence="1">
        <text>phosphate(out) + ATP + H2O = ADP + 2 phosphate(in) + H(+)</text>
        <dbReference type="Rhea" id="RHEA:24440"/>
        <dbReference type="ChEBI" id="CHEBI:15377"/>
        <dbReference type="ChEBI" id="CHEBI:15378"/>
        <dbReference type="ChEBI" id="CHEBI:30616"/>
        <dbReference type="ChEBI" id="CHEBI:43474"/>
        <dbReference type="ChEBI" id="CHEBI:456216"/>
        <dbReference type="EC" id="7.3.2.1"/>
    </reaction>
</comment>
<comment type="subunit">
    <text evidence="1">The complex is composed of two ATP-binding proteins (PstB), two transmembrane proteins (PstC and PstA) and a solute-binding protein (PstS).</text>
</comment>
<comment type="subcellular location">
    <subcellularLocation>
        <location evidence="1">Cell membrane</location>
        <topology evidence="1">Peripheral membrane protein</topology>
    </subcellularLocation>
</comment>
<comment type="similarity">
    <text evidence="1">Belongs to the ABC transporter superfamily. Phosphate importer (TC 3.A.1.7) family.</text>
</comment>
<organism>
    <name type="scientific">Listeria innocua serovar 6a (strain ATCC BAA-680 / CLIP 11262)</name>
    <dbReference type="NCBI Taxonomy" id="272626"/>
    <lineage>
        <taxon>Bacteria</taxon>
        <taxon>Bacillati</taxon>
        <taxon>Bacillota</taxon>
        <taxon>Bacilli</taxon>
        <taxon>Bacillales</taxon>
        <taxon>Listeriaceae</taxon>
        <taxon>Listeria</taxon>
    </lineage>
</organism>
<reference key="1">
    <citation type="journal article" date="2001" name="Science">
        <title>Comparative genomics of Listeria species.</title>
        <authorList>
            <person name="Glaser P."/>
            <person name="Frangeul L."/>
            <person name="Buchrieser C."/>
            <person name="Rusniok C."/>
            <person name="Amend A."/>
            <person name="Baquero F."/>
            <person name="Berche P."/>
            <person name="Bloecker H."/>
            <person name="Brandt P."/>
            <person name="Chakraborty T."/>
            <person name="Charbit A."/>
            <person name="Chetouani F."/>
            <person name="Couve E."/>
            <person name="de Daruvar A."/>
            <person name="Dehoux P."/>
            <person name="Domann E."/>
            <person name="Dominguez-Bernal G."/>
            <person name="Duchaud E."/>
            <person name="Durant L."/>
            <person name="Dussurget O."/>
            <person name="Entian K.-D."/>
            <person name="Fsihi H."/>
            <person name="Garcia-del Portillo F."/>
            <person name="Garrido P."/>
            <person name="Gautier L."/>
            <person name="Goebel W."/>
            <person name="Gomez-Lopez N."/>
            <person name="Hain T."/>
            <person name="Hauf J."/>
            <person name="Jackson D."/>
            <person name="Jones L.-M."/>
            <person name="Kaerst U."/>
            <person name="Kreft J."/>
            <person name="Kuhn M."/>
            <person name="Kunst F."/>
            <person name="Kurapkat G."/>
            <person name="Madueno E."/>
            <person name="Maitournam A."/>
            <person name="Mata Vicente J."/>
            <person name="Ng E."/>
            <person name="Nedjari H."/>
            <person name="Nordsiek G."/>
            <person name="Novella S."/>
            <person name="de Pablos B."/>
            <person name="Perez-Diaz J.-C."/>
            <person name="Purcell R."/>
            <person name="Remmel B."/>
            <person name="Rose M."/>
            <person name="Schlueter T."/>
            <person name="Simoes N."/>
            <person name="Tierrez A."/>
            <person name="Vazquez-Boland J.-A."/>
            <person name="Voss H."/>
            <person name="Wehland J."/>
            <person name="Cossart P."/>
        </authorList>
    </citation>
    <scope>NUCLEOTIDE SEQUENCE [LARGE SCALE GENOMIC DNA]</scope>
    <source>
        <strain>ATCC BAA-680 / CLIP 11262</strain>
    </source>
</reference>
<protein>
    <recommendedName>
        <fullName evidence="1">Phosphate import ATP-binding protein PstB 2</fullName>
        <ecNumber evidence="1">7.3.2.1</ecNumber>
    </recommendedName>
    <alternativeName>
        <fullName evidence="1">ABC phosphate transporter 2</fullName>
    </alternativeName>
    <alternativeName>
        <fullName evidence="1">Phosphate-transporting ATPase 2</fullName>
    </alternativeName>
</protein>
<dbReference type="EC" id="7.3.2.1" evidence="1"/>
<dbReference type="EMBL" id="AL596173">
    <property type="protein sequence ID" value="CAC97866.1"/>
    <property type="molecule type" value="Genomic_DNA"/>
</dbReference>
<dbReference type="PIR" id="AB1762">
    <property type="entry name" value="AB1762"/>
</dbReference>
<dbReference type="SMR" id="Q927Z7"/>
<dbReference type="STRING" id="272626.gene:17567020"/>
<dbReference type="KEGG" id="lin:lin2639"/>
<dbReference type="eggNOG" id="COG1117">
    <property type="taxonomic scope" value="Bacteria"/>
</dbReference>
<dbReference type="HOGENOM" id="CLU_000604_1_22_9"/>
<dbReference type="OrthoDB" id="9802185at2"/>
<dbReference type="Proteomes" id="UP000002513">
    <property type="component" value="Chromosome"/>
</dbReference>
<dbReference type="GO" id="GO:0005886">
    <property type="term" value="C:plasma membrane"/>
    <property type="evidence" value="ECO:0007669"/>
    <property type="project" value="UniProtKB-SubCell"/>
</dbReference>
<dbReference type="GO" id="GO:0005524">
    <property type="term" value="F:ATP binding"/>
    <property type="evidence" value="ECO:0007669"/>
    <property type="project" value="UniProtKB-KW"/>
</dbReference>
<dbReference type="GO" id="GO:0016887">
    <property type="term" value="F:ATP hydrolysis activity"/>
    <property type="evidence" value="ECO:0007669"/>
    <property type="project" value="InterPro"/>
</dbReference>
<dbReference type="GO" id="GO:0015415">
    <property type="term" value="F:ATPase-coupled phosphate ion transmembrane transporter activity"/>
    <property type="evidence" value="ECO:0007669"/>
    <property type="project" value="UniProtKB-EC"/>
</dbReference>
<dbReference type="GO" id="GO:0035435">
    <property type="term" value="P:phosphate ion transmembrane transport"/>
    <property type="evidence" value="ECO:0007669"/>
    <property type="project" value="InterPro"/>
</dbReference>
<dbReference type="CDD" id="cd03260">
    <property type="entry name" value="ABC_PstB_phosphate_transporter"/>
    <property type="match status" value="1"/>
</dbReference>
<dbReference type="FunFam" id="3.40.50.300:FF:000132">
    <property type="entry name" value="Phosphate import ATP-binding protein PstB"/>
    <property type="match status" value="1"/>
</dbReference>
<dbReference type="Gene3D" id="3.40.50.300">
    <property type="entry name" value="P-loop containing nucleotide triphosphate hydrolases"/>
    <property type="match status" value="1"/>
</dbReference>
<dbReference type="InterPro" id="IPR003593">
    <property type="entry name" value="AAA+_ATPase"/>
</dbReference>
<dbReference type="InterPro" id="IPR003439">
    <property type="entry name" value="ABC_transporter-like_ATP-bd"/>
</dbReference>
<dbReference type="InterPro" id="IPR017871">
    <property type="entry name" value="ABC_transporter-like_CS"/>
</dbReference>
<dbReference type="InterPro" id="IPR027417">
    <property type="entry name" value="P-loop_NTPase"/>
</dbReference>
<dbReference type="InterPro" id="IPR005670">
    <property type="entry name" value="PstB-like"/>
</dbReference>
<dbReference type="NCBIfam" id="TIGR00972">
    <property type="entry name" value="3a0107s01c2"/>
    <property type="match status" value="1"/>
</dbReference>
<dbReference type="PANTHER" id="PTHR43423">
    <property type="entry name" value="ABC TRANSPORTER I FAMILY MEMBER 17"/>
    <property type="match status" value="1"/>
</dbReference>
<dbReference type="PANTHER" id="PTHR43423:SF10">
    <property type="entry name" value="PHOSPHATE IMPORT ATP-BINDING PROTEIN PSTB 2"/>
    <property type="match status" value="1"/>
</dbReference>
<dbReference type="Pfam" id="PF00005">
    <property type="entry name" value="ABC_tran"/>
    <property type="match status" value="1"/>
</dbReference>
<dbReference type="SMART" id="SM00382">
    <property type="entry name" value="AAA"/>
    <property type="match status" value="1"/>
</dbReference>
<dbReference type="SUPFAM" id="SSF52540">
    <property type="entry name" value="P-loop containing nucleoside triphosphate hydrolases"/>
    <property type="match status" value="1"/>
</dbReference>
<dbReference type="PROSITE" id="PS00211">
    <property type="entry name" value="ABC_TRANSPORTER_1"/>
    <property type="match status" value="1"/>
</dbReference>
<dbReference type="PROSITE" id="PS50893">
    <property type="entry name" value="ABC_TRANSPORTER_2"/>
    <property type="match status" value="1"/>
</dbReference>
<dbReference type="PROSITE" id="PS51238">
    <property type="entry name" value="PSTB"/>
    <property type="match status" value="1"/>
</dbReference>
<sequence length="271" mass="30439">MLTKKPEINTILQTTPDPHSLPAAMATEDLHVYYGDNHAIKGVDLTFPENKVTALIGPSGCGKSTYLRALNRMNDEIDGCRMEGQILYDGININRKEVDLYNVRKEIGMVFQKPNPFTKSIYENVAFGLKRHGMKNKKEIMERVEKSLRRAALWDEVKDDLGKSALSLSGGQQQRLCIARAVAMQPKVLLLDEPASALDPISTSKIEDLINELKNKYTIIIVTHNMQQAARVSDYTSFFYLGEVVEFSGTSELFTNPQEKQTEDYISGNFG</sequence>
<accession>Q927Z7</accession>
<feature type="chain" id="PRO_0000092830" description="Phosphate import ATP-binding protein PstB 2">
    <location>
        <begin position="1"/>
        <end position="271"/>
    </location>
</feature>
<feature type="domain" description="ABC transporter" evidence="1">
    <location>
        <begin position="25"/>
        <end position="266"/>
    </location>
</feature>
<feature type="region of interest" description="Disordered" evidence="2">
    <location>
        <begin position="1"/>
        <end position="20"/>
    </location>
</feature>
<feature type="binding site" evidence="1">
    <location>
        <begin position="57"/>
        <end position="64"/>
    </location>
    <ligand>
        <name>ATP</name>
        <dbReference type="ChEBI" id="CHEBI:30616"/>
    </ligand>
</feature>